<accession>A6KYH2</accession>
<gene>
    <name evidence="1" type="primary">rpsK</name>
    <name type="ordered locus">BVU_0782</name>
</gene>
<dbReference type="EMBL" id="CP000139">
    <property type="protein sequence ID" value="ABR38486.1"/>
    <property type="molecule type" value="Genomic_DNA"/>
</dbReference>
<dbReference type="RefSeq" id="WP_005844897.1">
    <property type="nucleotide sequence ID" value="NZ_JANSWM010000035.1"/>
</dbReference>
<dbReference type="SMR" id="A6KYH2"/>
<dbReference type="STRING" id="435590.BVU_0782"/>
<dbReference type="PaxDb" id="435590-BVU_0782"/>
<dbReference type="GeneID" id="93448998"/>
<dbReference type="KEGG" id="bvu:BVU_0782"/>
<dbReference type="eggNOG" id="COG0100">
    <property type="taxonomic scope" value="Bacteria"/>
</dbReference>
<dbReference type="HOGENOM" id="CLU_072439_5_0_10"/>
<dbReference type="BioCyc" id="BVUL435590:G1G59-822-MONOMER"/>
<dbReference type="Proteomes" id="UP000002861">
    <property type="component" value="Chromosome"/>
</dbReference>
<dbReference type="GO" id="GO:1990904">
    <property type="term" value="C:ribonucleoprotein complex"/>
    <property type="evidence" value="ECO:0007669"/>
    <property type="project" value="UniProtKB-KW"/>
</dbReference>
<dbReference type="GO" id="GO:0005840">
    <property type="term" value="C:ribosome"/>
    <property type="evidence" value="ECO:0007669"/>
    <property type="project" value="UniProtKB-KW"/>
</dbReference>
<dbReference type="GO" id="GO:0019843">
    <property type="term" value="F:rRNA binding"/>
    <property type="evidence" value="ECO:0007669"/>
    <property type="project" value="UniProtKB-UniRule"/>
</dbReference>
<dbReference type="GO" id="GO:0003735">
    <property type="term" value="F:structural constituent of ribosome"/>
    <property type="evidence" value="ECO:0007669"/>
    <property type="project" value="InterPro"/>
</dbReference>
<dbReference type="GO" id="GO:0006412">
    <property type="term" value="P:translation"/>
    <property type="evidence" value="ECO:0007669"/>
    <property type="project" value="UniProtKB-UniRule"/>
</dbReference>
<dbReference type="FunFam" id="3.30.420.80:FF:000004">
    <property type="entry name" value="30S ribosomal protein S11"/>
    <property type="match status" value="1"/>
</dbReference>
<dbReference type="Gene3D" id="3.30.420.80">
    <property type="entry name" value="Ribosomal protein S11"/>
    <property type="match status" value="1"/>
</dbReference>
<dbReference type="HAMAP" id="MF_01310">
    <property type="entry name" value="Ribosomal_uS11"/>
    <property type="match status" value="1"/>
</dbReference>
<dbReference type="InterPro" id="IPR001971">
    <property type="entry name" value="Ribosomal_uS11"/>
</dbReference>
<dbReference type="InterPro" id="IPR019981">
    <property type="entry name" value="Ribosomal_uS11_bac-type"/>
</dbReference>
<dbReference type="InterPro" id="IPR018102">
    <property type="entry name" value="Ribosomal_uS11_CS"/>
</dbReference>
<dbReference type="InterPro" id="IPR036967">
    <property type="entry name" value="Ribosomal_uS11_sf"/>
</dbReference>
<dbReference type="NCBIfam" id="NF003698">
    <property type="entry name" value="PRK05309.1"/>
    <property type="match status" value="1"/>
</dbReference>
<dbReference type="NCBIfam" id="TIGR03632">
    <property type="entry name" value="uS11_bact"/>
    <property type="match status" value="1"/>
</dbReference>
<dbReference type="PANTHER" id="PTHR11759">
    <property type="entry name" value="40S RIBOSOMAL PROTEIN S14/30S RIBOSOMAL PROTEIN S11"/>
    <property type="match status" value="1"/>
</dbReference>
<dbReference type="Pfam" id="PF00411">
    <property type="entry name" value="Ribosomal_S11"/>
    <property type="match status" value="1"/>
</dbReference>
<dbReference type="PIRSF" id="PIRSF002131">
    <property type="entry name" value="Ribosomal_S11"/>
    <property type="match status" value="1"/>
</dbReference>
<dbReference type="SUPFAM" id="SSF53137">
    <property type="entry name" value="Translational machinery components"/>
    <property type="match status" value="1"/>
</dbReference>
<dbReference type="PROSITE" id="PS00054">
    <property type="entry name" value="RIBOSOMAL_S11"/>
    <property type="match status" value="1"/>
</dbReference>
<protein>
    <recommendedName>
        <fullName evidence="1">Small ribosomal subunit protein uS11</fullName>
    </recommendedName>
    <alternativeName>
        <fullName evidence="2">30S ribosomal protein S11</fullName>
    </alternativeName>
</protein>
<reference key="1">
    <citation type="journal article" date="2007" name="PLoS Biol.">
        <title>Evolution of symbiotic bacteria in the distal human intestine.</title>
        <authorList>
            <person name="Xu J."/>
            <person name="Mahowald M.A."/>
            <person name="Ley R.E."/>
            <person name="Lozupone C.A."/>
            <person name="Hamady M."/>
            <person name="Martens E.C."/>
            <person name="Henrissat B."/>
            <person name="Coutinho P.M."/>
            <person name="Minx P."/>
            <person name="Latreille P."/>
            <person name="Cordum H."/>
            <person name="Van Brunt A."/>
            <person name="Kim K."/>
            <person name="Fulton R.S."/>
            <person name="Fulton L.A."/>
            <person name="Clifton S.W."/>
            <person name="Wilson R.K."/>
            <person name="Knight R.D."/>
            <person name="Gordon J.I."/>
        </authorList>
    </citation>
    <scope>NUCLEOTIDE SEQUENCE [LARGE SCALE GENOMIC DNA]</scope>
    <source>
        <strain>ATCC 8482 / DSM 1447 / JCM 5826 / CCUG 4940 / NBRC 14291 / NCTC 11154</strain>
    </source>
</reference>
<sequence length="129" mass="13878">MAKKTVAAKKRNVKVDANGQLHVHSSFNNIIVSLANSEGQIISWSSAGKMGFRGSKKNTPYAAQMAAQDCAKVAFDLGLRKVKAYVKGPGNGRESAIRTVHGAGIEVTEIIDVTPLPHNGCRPPKRRRV</sequence>
<organism>
    <name type="scientific">Phocaeicola vulgatus (strain ATCC 8482 / DSM 1447 / JCM 5826 / CCUG 4940 / NBRC 14291 / NCTC 11154)</name>
    <name type="common">Bacteroides vulgatus</name>
    <dbReference type="NCBI Taxonomy" id="435590"/>
    <lineage>
        <taxon>Bacteria</taxon>
        <taxon>Pseudomonadati</taxon>
        <taxon>Bacteroidota</taxon>
        <taxon>Bacteroidia</taxon>
        <taxon>Bacteroidales</taxon>
        <taxon>Bacteroidaceae</taxon>
        <taxon>Phocaeicola</taxon>
    </lineage>
</organism>
<comment type="function">
    <text evidence="1">Located on the platform of the 30S subunit, it bridges several disparate RNA helices of the 16S rRNA. Forms part of the Shine-Dalgarno cleft in the 70S ribosome.</text>
</comment>
<comment type="subunit">
    <text evidence="1">Part of the 30S ribosomal subunit. Interacts with proteins S7 and S18. Binds to IF-3.</text>
</comment>
<comment type="similarity">
    <text evidence="1">Belongs to the universal ribosomal protein uS11 family.</text>
</comment>
<evidence type="ECO:0000255" key="1">
    <source>
        <dbReference type="HAMAP-Rule" id="MF_01310"/>
    </source>
</evidence>
<evidence type="ECO:0000305" key="2"/>
<feature type="chain" id="PRO_1000051821" description="Small ribosomal subunit protein uS11">
    <location>
        <begin position="1"/>
        <end position="129"/>
    </location>
</feature>
<name>RS11_PHOV8</name>
<keyword id="KW-0687">Ribonucleoprotein</keyword>
<keyword id="KW-0689">Ribosomal protein</keyword>
<keyword id="KW-0694">RNA-binding</keyword>
<keyword id="KW-0699">rRNA-binding</keyword>
<proteinExistence type="inferred from homology"/>